<keyword id="KW-0106">Calcium</keyword>
<keyword id="KW-0378">Hydrolase</keyword>
<keyword id="KW-0472">Membrane</keyword>
<keyword id="KW-0479">Metal-binding</keyword>
<keyword id="KW-1185">Reference proteome</keyword>
<keyword id="KW-0812">Transmembrane</keyword>
<keyword id="KW-1133">Transmembrane helix</keyword>
<protein>
    <recommendedName>
        <fullName>Arylsulfatase H</fullName>
        <shortName>ASH</shortName>
        <ecNumber>3.1.6.-</ecNumber>
    </recommendedName>
</protein>
<comment type="cofactor">
    <cofactor evidence="1">
        <name>Ca(2+)</name>
        <dbReference type="ChEBI" id="CHEBI:29108"/>
    </cofactor>
    <text evidence="1">Binds 1 Ca(2+) ion per subunit.</text>
</comment>
<comment type="subcellular location">
    <subcellularLocation>
        <location evidence="3">Membrane</location>
        <topology evidence="3">Multi-pass membrane protein</topology>
    </subcellularLocation>
</comment>
<comment type="PTM">
    <text evidence="1">The conversion to 3-oxoalanine (also known as C-formylglycine, FGly), of a serine or cysteine residue in prokaryotes and of a cysteine residue in eukaryotes, is critical for catalytic activity.</text>
</comment>
<comment type="similarity">
    <text evidence="3">Belongs to the sulfatase family.</text>
</comment>
<proteinExistence type="evidence at transcript level"/>
<accession>Q32KH8</accession>
<name>ARSH_CANLF</name>
<reference key="1">
    <citation type="journal article" date="2005" name="Nature">
        <title>Genome sequence, comparative analysis and haplotype structure of the domestic dog.</title>
        <authorList>
            <person name="Lindblad-Toh K."/>
            <person name="Wade C.M."/>
            <person name="Mikkelsen T.S."/>
            <person name="Karlsson E.K."/>
            <person name="Jaffe D.B."/>
            <person name="Kamal M."/>
            <person name="Clamp M."/>
            <person name="Chang J.L."/>
            <person name="Kulbokas E.J. III"/>
            <person name="Zody M.C."/>
            <person name="Mauceli E."/>
            <person name="Xie X."/>
            <person name="Breen M."/>
            <person name="Wayne R.K."/>
            <person name="Ostrander E.A."/>
            <person name="Ponting C.P."/>
            <person name="Galibert F."/>
            <person name="Smith D.R."/>
            <person name="deJong P.J."/>
            <person name="Kirkness E.F."/>
            <person name="Alvarez P."/>
            <person name="Biagi T."/>
            <person name="Brockman W."/>
            <person name="Butler J."/>
            <person name="Chin C.-W."/>
            <person name="Cook A."/>
            <person name="Cuff J."/>
            <person name="Daly M.J."/>
            <person name="DeCaprio D."/>
            <person name="Gnerre S."/>
            <person name="Grabherr M."/>
            <person name="Kellis M."/>
            <person name="Kleber M."/>
            <person name="Bardeleben C."/>
            <person name="Goodstadt L."/>
            <person name="Heger A."/>
            <person name="Hitte C."/>
            <person name="Kim L."/>
            <person name="Koepfli K.-P."/>
            <person name="Parker H.G."/>
            <person name="Pollinger J.P."/>
            <person name="Searle S.M.J."/>
            <person name="Sutter N.B."/>
            <person name="Thomas R."/>
            <person name="Webber C."/>
            <person name="Baldwin J."/>
            <person name="Abebe A."/>
            <person name="Abouelleil A."/>
            <person name="Aftuck L."/>
            <person name="Ait-Zahra M."/>
            <person name="Aldredge T."/>
            <person name="Allen N."/>
            <person name="An P."/>
            <person name="Anderson S."/>
            <person name="Antoine C."/>
            <person name="Arachchi H."/>
            <person name="Aslam A."/>
            <person name="Ayotte L."/>
            <person name="Bachantsang P."/>
            <person name="Barry A."/>
            <person name="Bayul T."/>
            <person name="Benamara M."/>
            <person name="Berlin A."/>
            <person name="Bessette D."/>
            <person name="Blitshteyn B."/>
            <person name="Bloom T."/>
            <person name="Blye J."/>
            <person name="Boguslavskiy L."/>
            <person name="Bonnet C."/>
            <person name="Boukhgalter B."/>
            <person name="Brown A."/>
            <person name="Cahill P."/>
            <person name="Calixte N."/>
            <person name="Camarata J."/>
            <person name="Cheshatsang Y."/>
            <person name="Chu J."/>
            <person name="Citroen M."/>
            <person name="Collymore A."/>
            <person name="Cooke P."/>
            <person name="Dawoe T."/>
            <person name="Daza R."/>
            <person name="Decktor K."/>
            <person name="DeGray S."/>
            <person name="Dhargay N."/>
            <person name="Dooley K."/>
            <person name="Dooley K."/>
            <person name="Dorje P."/>
            <person name="Dorjee K."/>
            <person name="Dorris L."/>
            <person name="Duffey N."/>
            <person name="Dupes A."/>
            <person name="Egbiremolen O."/>
            <person name="Elong R."/>
            <person name="Falk J."/>
            <person name="Farina A."/>
            <person name="Faro S."/>
            <person name="Ferguson D."/>
            <person name="Ferreira P."/>
            <person name="Fisher S."/>
            <person name="FitzGerald M."/>
            <person name="Foley K."/>
            <person name="Foley C."/>
            <person name="Franke A."/>
            <person name="Friedrich D."/>
            <person name="Gage D."/>
            <person name="Garber M."/>
            <person name="Gearin G."/>
            <person name="Giannoukos G."/>
            <person name="Goode T."/>
            <person name="Goyette A."/>
            <person name="Graham J."/>
            <person name="Grandbois E."/>
            <person name="Gyaltsen K."/>
            <person name="Hafez N."/>
            <person name="Hagopian D."/>
            <person name="Hagos B."/>
            <person name="Hall J."/>
            <person name="Healy C."/>
            <person name="Hegarty R."/>
            <person name="Honan T."/>
            <person name="Horn A."/>
            <person name="Houde N."/>
            <person name="Hughes L."/>
            <person name="Hunnicutt L."/>
            <person name="Husby M."/>
            <person name="Jester B."/>
            <person name="Jones C."/>
            <person name="Kamat A."/>
            <person name="Kanga B."/>
            <person name="Kells C."/>
            <person name="Khazanovich D."/>
            <person name="Kieu A.C."/>
            <person name="Kisner P."/>
            <person name="Kumar M."/>
            <person name="Lance K."/>
            <person name="Landers T."/>
            <person name="Lara M."/>
            <person name="Lee W."/>
            <person name="Leger J.-P."/>
            <person name="Lennon N."/>
            <person name="Leuper L."/>
            <person name="LeVine S."/>
            <person name="Liu J."/>
            <person name="Liu X."/>
            <person name="Lokyitsang Y."/>
            <person name="Lokyitsang T."/>
            <person name="Lui A."/>
            <person name="Macdonald J."/>
            <person name="Major J."/>
            <person name="Marabella R."/>
            <person name="Maru K."/>
            <person name="Matthews C."/>
            <person name="McDonough S."/>
            <person name="Mehta T."/>
            <person name="Meldrim J."/>
            <person name="Melnikov A."/>
            <person name="Meneus L."/>
            <person name="Mihalev A."/>
            <person name="Mihova T."/>
            <person name="Miller K."/>
            <person name="Mittelman R."/>
            <person name="Mlenga V."/>
            <person name="Mulrain L."/>
            <person name="Munson G."/>
            <person name="Navidi A."/>
            <person name="Naylor J."/>
            <person name="Nguyen T."/>
            <person name="Nguyen N."/>
            <person name="Nguyen C."/>
            <person name="Nguyen T."/>
            <person name="Nicol R."/>
            <person name="Norbu N."/>
            <person name="Norbu C."/>
            <person name="Novod N."/>
            <person name="Nyima T."/>
            <person name="Olandt P."/>
            <person name="O'Neill B."/>
            <person name="O'Neill K."/>
            <person name="Osman S."/>
            <person name="Oyono L."/>
            <person name="Patti C."/>
            <person name="Perrin D."/>
            <person name="Phunkhang P."/>
            <person name="Pierre F."/>
            <person name="Priest M."/>
            <person name="Rachupka A."/>
            <person name="Raghuraman S."/>
            <person name="Rameau R."/>
            <person name="Ray V."/>
            <person name="Raymond C."/>
            <person name="Rege F."/>
            <person name="Rise C."/>
            <person name="Rogers J."/>
            <person name="Rogov P."/>
            <person name="Sahalie J."/>
            <person name="Settipalli S."/>
            <person name="Sharpe T."/>
            <person name="Shea T."/>
            <person name="Sheehan M."/>
            <person name="Sherpa N."/>
            <person name="Shi J."/>
            <person name="Shih D."/>
            <person name="Sloan J."/>
            <person name="Smith C."/>
            <person name="Sparrow T."/>
            <person name="Stalker J."/>
            <person name="Stange-Thomann N."/>
            <person name="Stavropoulos S."/>
            <person name="Stone C."/>
            <person name="Stone S."/>
            <person name="Sykes S."/>
            <person name="Tchuinga P."/>
            <person name="Tenzing P."/>
            <person name="Tesfaye S."/>
            <person name="Thoulutsang D."/>
            <person name="Thoulutsang Y."/>
            <person name="Topham K."/>
            <person name="Topping I."/>
            <person name="Tsamla T."/>
            <person name="Vassiliev H."/>
            <person name="Venkataraman V."/>
            <person name="Vo A."/>
            <person name="Wangchuk T."/>
            <person name="Wangdi T."/>
            <person name="Weiand M."/>
            <person name="Wilkinson J."/>
            <person name="Wilson A."/>
            <person name="Yadav S."/>
            <person name="Yang S."/>
            <person name="Yang X."/>
            <person name="Young G."/>
            <person name="Yu Q."/>
            <person name="Zainoun J."/>
            <person name="Zembek L."/>
            <person name="Zimmer A."/>
            <person name="Lander E.S."/>
        </authorList>
    </citation>
    <scope>NUCLEOTIDE SEQUENCE [LARGE SCALE GENOMIC DNA]</scope>
    <source>
        <strain>Boxer</strain>
    </source>
</reference>
<reference key="2">
    <citation type="journal article" date="2005" name="Hum. Mol. Genet.">
        <title>Sulfatases and sulfatase modifying factors: an exclusive and promiscuous relationship.</title>
        <authorList>
            <person name="Sardiello M."/>
            <person name="Annunziata I."/>
            <person name="Roma G."/>
            <person name="Ballabio A."/>
        </authorList>
    </citation>
    <scope>IDENTIFICATION</scope>
</reference>
<feature type="chain" id="PRO_0000295622" description="Arylsulfatase H">
    <location>
        <begin position="1"/>
        <end position="562"/>
    </location>
</feature>
<feature type="transmembrane region" description="Helical" evidence="2">
    <location>
        <begin position="167"/>
        <end position="187"/>
    </location>
</feature>
<feature type="transmembrane region" description="Helical" evidence="2">
    <location>
        <begin position="189"/>
        <end position="209"/>
    </location>
</feature>
<feature type="active site" description="Nucleophile" evidence="1">
    <location>
        <position position="55"/>
    </location>
</feature>
<feature type="active site" evidence="1">
    <location>
        <position position="117"/>
    </location>
</feature>
<feature type="binding site" evidence="1">
    <location>
        <position position="15"/>
    </location>
    <ligand>
        <name>Ca(2+)</name>
        <dbReference type="ChEBI" id="CHEBI:29108"/>
    </ligand>
</feature>
<feature type="binding site" evidence="1">
    <location>
        <position position="16"/>
    </location>
    <ligand>
        <name>Ca(2+)</name>
        <dbReference type="ChEBI" id="CHEBI:29108"/>
    </ligand>
</feature>
<feature type="binding site" description="via 3-oxoalanine" evidence="1">
    <location>
        <position position="55"/>
    </location>
    <ligand>
        <name>Ca(2+)</name>
        <dbReference type="ChEBI" id="CHEBI:29108"/>
    </ligand>
</feature>
<feature type="binding site" evidence="1">
    <location>
        <position position="115"/>
    </location>
    <ligand>
        <name>substrate</name>
    </ligand>
</feature>
<feature type="binding site" evidence="1">
    <location>
        <position position="271"/>
    </location>
    <ligand>
        <name>substrate</name>
    </ligand>
</feature>
<feature type="binding site" evidence="1">
    <location>
        <position position="323"/>
    </location>
    <ligand>
        <name>Ca(2+)</name>
        <dbReference type="ChEBI" id="CHEBI:29108"/>
    </ligand>
</feature>
<feature type="binding site" evidence="1">
    <location>
        <position position="324"/>
    </location>
    <ligand>
        <name>Ca(2+)</name>
        <dbReference type="ChEBI" id="CHEBI:29108"/>
    </ligand>
</feature>
<feature type="modified residue" description="3-oxoalanine (Cys)" evidence="1">
    <location>
        <position position="55"/>
    </location>
</feature>
<evidence type="ECO:0000250" key="1">
    <source>
        <dbReference type="UniProtKB" id="P15289"/>
    </source>
</evidence>
<evidence type="ECO:0000255" key="2"/>
<evidence type="ECO:0000305" key="3"/>
<organism>
    <name type="scientific">Canis lupus familiaris</name>
    <name type="common">Dog</name>
    <name type="synonym">Canis familiaris</name>
    <dbReference type="NCBI Taxonomy" id="9615"/>
    <lineage>
        <taxon>Eukaryota</taxon>
        <taxon>Metazoa</taxon>
        <taxon>Chordata</taxon>
        <taxon>Craniata</taxon>
        <taxon>Vertebrata</taxon>
        <taxon>Euteleostomi</taxon>
        <taxon>Mammalia</taxon>
        <taxon>Eutheria</taxon>
        <taxon>Laurasiatheria</taxon>
        <taxon>Carnivora</taxon>
        <taxon>Caniformia</taxon>
        <taxon>Canidae</taxon>
        <taxon>Canis</taxon>
    </lineage>
</organism>
<dbReference type="EC" id="3.1.6.-"/>
<dbReference type="EMBL" id="AAEX01047377">
    <property type="status" value="NOT_ANNOTATED_CDS"/>
    <property type="molecule type" value="Genomic_DNA"/>
</dbReference>
<dbReference type="EMBL" id="BN000759">
    <property type="protein sequence ID" value="CAI85005.1"/>
    <property type="molecule type" value="mRNA"/>
</dbReference>
<dbReference type="RefSeq" id="NP_001041588.1">
    <property type="nucleotide sequence ID" value="NM_001048123.1"/>
</dbReference>
<dbReference type="SMR" id="Q32KH8"/>
<dbReference type="STRING" id="9615.ENSCAFP00000058533"/>
<dbReference type="PaxDb" id="9612-ENSCAFP00000016435"/>
<dbReference type="GeneID" id="491720"/>
<dbReference type="KEGG" id="cfa:491720"/>
<dbReference type="CTD" id="347527"/>
<dbReference type="eggNOG" id="KOG3867">
    <property type="taxonomic scope" value="Eukaryota"/>
</dbReference>
<dbReference type="InParanoid" id="Q32KH8"/>
<dbReference type="OrthoDB" id="9180at33554"/>
<dbReference type="Proteomes" id="UP000002254">
    <property type="component" value="Unplaced"/>
</dbReference>
<dbReference type="Proteomes" id="UP000694429">
    <property type="component" value="Unplaced"/>
</dbReference>
<dbReference type="Proteomes" id="UP000694542">
    <property type="component" value="Unplaced"/>
</dbReference>
<dbReference type="Proteomes" id="UP000805418">
    <property type="component" value="Unplaced"/>
</dbReference>
<dbReference type="GO" id="GO:0016020">
    <property type="term" value="C:membrane"/>
    <property type="evidence" value="ECO:0007669"/>
    <property type="project" value="UniProtKB-SubCell"/>
</dbReference>
<dbReference type="GO" id="GO:0004065">
    <property type="term" value="F:arylsulfatase activity"/>
    <property type="evidence" value="ECO:0000318"/>
    <property type="project" value="GO_Central"/>
</dbReference>
<dbReference type="GO" id="GO:0046872">
    <property type="term" value="F:metal ion binding"/>
    <property type="evidence" value="ECO:0007669"/>
    <property type="project" value="UniProtKB-KW"/>
</dbReference>
<dbReference type="FunFam" id="1.10.287.550:FF:000001">
    <property type="entry name" value="Arylsulfatase E"/>
    <property type="match status" value="1"/>
</dbReference>
<dbReference type="FunFam" id="3.30.1120.10:FF:000001">
    <property type="entry name" value="Arylsulfatase E"/>
    <property type="match status" value="1"/>
</dbReference>
<dbReference type="FunFam" id="3.40.720.10:FF:000233">
    <property type="entry name" value="Predicted protein"/>
    <property type="match status" value="1"/>
</dbReference>
<dbReference type="FunFam" id="3.40.720.10:FF:000174">
    <property type="entry name" value="Uncharacterized protein"/>
    <property type="match status" value="1"/>
</dbReference>
<dbReference type="Gene3D" id="3.30.1120.10">
    <property type="match status" value="1"/>
</dbReference>
<dbReference type="Gene3D" id="3.40.720.10">
    <property type="entry name" value="Alkaline Phosphatase, subunit A"/>
    <property type="match status" value="1"/>
</dbReference>
<dbReference type="Gene3D" id="1.10.287.550">
    <property type="entry name" value="Helix hairpin bin"/>
    <property type="match status" value="1"/>
</dbReference>
<dbReference type="InterPro" id="IPR017850">
    <property type="entry name" value="Alkaline_phosphatase_core_sf"/>
</dbReference>
<dbReference type="InterPro" id="IPR050738">
    <property type="entry name" value="Sulfatase"/>
</dbReference>
<dbReference type="InterPro" id="IPR024607">
    <property type="entry name" value="Sulfatase_CS"/>
</dbReference>
<dbReference type="InterPro" id="IPR000917">
    <property type="entry name" value="Sulfatase_N"/>
</dbReference>
<dbReference type="PANTHER" id="PTHR42693">
    <property type="entry name" value="ARYLSULFATASE FAMILY MEMBER"/>
    <property type="match status" value="1"/>
</dbReference>
<dbReference type="PANTHER" id="PTHR42693:SF16">
    <property type="entry name" value="ARYLSULFATASE H"/>
    <property type="match status" value="1"/>
</dbReference>
<dbReference type="Pfam" id="PF00884">
    <property type="entry name" value="Sulfatase"/>
    <property type="match status" value="1"/>
</dbReference>
<dbReference type="Pfam" id="PF14707">
    <property type="entry name" value="Sulfatase_C"/>
    <property type="match status" value="1"/>
</dbReference>
<dbReference type="SUPFAM" id="SSF53649">
    <property type="entry name" value="Alkaline phosphatase-like"/>
    <property type="match status" value="1"/>
</dbReference>
<dbReference type="PROSITE" id="PS00523">
    <property type="entry name" value="SULFATASE_1"/>
    <property type="match status" value="1"/>
</dbReference>
<dbReference type="PROSITE" id="PS00149">
    <property type="entry name" value="SULFATASE_2"/>
    <property type="match status" value="1"/>
</dbReference>
<gene>
    <name type="primary">ARSH</name>
</gene>
<sequence>MTRNSRPNIVLLMADDLGVGDLCCYGNNTVSTPNIDRLASEGVRLTQHLAAASVCTPSRAAFLTGRYPIRSGMASPYNLNRGLTWLGGSGGLPTNETTFAKLLQHYGYRTGLIGKWHQGLSCASRNDHCYHPLNHGFDYFYGLPFGLLSDCQASRTPELHRWLRIKLWISTAVLSLVPLLLLIPKYARWFVVPWKVILTFALLAFLFFISWYSSYGFTRRWNCILMRNHEIIQQPMREERVASLMLKEALAFIDRYKRGPFLLFVSFLHVHTPLITKDKFVGHSKYGLYGDNVEEMDWMVGKILETLDQERLTNHTLVYFTSDNGGRLEVQEGEVQLGGSNGIYKGGQGMGGWEGGIRVPGIFRWPTVLQAGKVINEPTSLMDIYPTLSYIGGGMLPQDRVIDGRNLMPLLEGRVSHSDHEFLFHYCGVYLHTARWHQKDCATVWKAHYVTPKFSPDGAGACYGSGICPCSGDVTYHDPPLLFDVSRDPSETRPLNPDNEALFDSVVKKIEAAIKEHRRTLTPVPQQFSVFNTLWKPWLQPCCGTFPFCGCDKEDDILSTAW</sequence>